<feature type="chain" id="PRO_0000342658" description="Putative uncharacterized protein PRO1716">
    <location>
        <begin position="1"/>
        <end position="43"/>
    </location>
</feature>
<proteinExistence type="uncertain"/>
<accession>Q9UHU1</accession>
<sequence>MLTALGQVNNIQKEFTIKKTKQADHNLVARIDEIQYVQGTINL</sequence>
<comment type="caution">
    <text evidence="1">Product of a dubious CDS prediction.</text>
</comment>
<dbReference type="EMBL" id="AF118072">
    <property type="protein sequence ID" value="AAF22016.1"/>
    <property type="molecule type" value="mRNA"/>
</dbReference>
<dbReference type="EMBL" id="CH471076">
    <property type="protein sequence ID" value="EAW74933.1"/>
    <property type="molecule type" value="Genomic_DNA"/>
</dbReference>
<dbReference type="BioMuta" id="PRO1716"/>
<dbReference type="neXtProt" id="NX_Q9UHU1"/>
<dbReference type="InParanoid" id="Q9UHU1"/>
<dbReference type="PAN-GO" id="Q9UHU1">
    <property type="GO annotations" value="0 GO annotations based on evolutionary models"/>
</dbReference>
<dbReference type="PhylomeDB" id="Q9UHU1"/>
<dbReference type="Pharos" id="Q9UHU1">
    <property type="development level" value="Tdark"/>
</dbReference>
<dbReference type="Proteomes" id="UP000005640">
    <property type="component" value="Unplaced"/>
</dbReference>
<reference key="1">
    <citation type="submission" date="1999-01" db="EMBL/GenBank/DDBJ databases">
        <title>Functional prediction of the coding sequences of 33 new genes deduced by analysis of cDNA clones from human fetal liver.</title>
        <authorList>
            <person name="Zhang C."/>
            <person name="Yu Y."/>
            <person name="Zhang S."/>
            <person name="Wei H."/>
            <person name="Zhou G."/>
            <person name="Bi J."/>
            <person name="Zhang Y."/>
            <person name="Liu M."/>
            <person name="He F."/>
        </authorList>
    </citation>
    <scope>NUCLEOTIDE SEQUENCE [LARGE SCALE MRNA]</scope>
    <source>
        <tissue>Fetal liver</tissue>
    </source>
</reference>
<reference key="2">
    <citation type="submission" date="2005-07" db="EMBL/GenBank/DDBJ databases">
        <authorList>
            <person name="Mural R.J."/>
            <person name="Istrail S."/>
            <person name="Sutton G.G."/>
            <person name="Florea L."/>
            <person name="Halpern A.L."/>
            <person name="Mobarry C.M."/>
            <person name="Lippert R."/>
            <person name="Walenz B."/>
            <person name="Shatkay H."/>
            <person name="Dew I."/>
            <person name="Miller J.R."/>
            <person name="Flanigan M.J."/>
            <person name="Edwards N.J."/>
            <person name="Bolanos R."/>
            <person name="Fasulo D."/>
            <person name="Halldorsson B.V."/>
            <person name="Hannenhalli S."/>
            <person name="Turner R."/>
            <person name="Yooseph S."/>
            <person name="Lu F."/>
            <person name="Nusskern D.R."/>
            <person name="Shue B.C."/>
            <person name="Zheng X.H."/>
            <person name="Zhong F."/>
            <person name="Delcher A.L."/>
            <person name="Huson D.H."/>
            <person name="Kravitz S.A."/>
            <person name="Mouchard L."/>
            <person name="Reinert K."/>
            <person name="Remington K.A."/>
            <person name="Clark A.G."/>
            <person name="Waterman M.S."/>
            <person name="Eichler E.E."/>
            <person name="Adams M.D."/>
            <person name="Hunkapiller M.W."/>
            <person name="Myers E.W."/>
            <person name="Venter J.C."/>
        </authorList>
    </citation>
    <scope>NUCLEOTIDE SEQUENCE [LARGE SCALE GENOMIC DNA]</scope>
</reference>
<organism>
    <name type="scientific">Homo sapiens</name>
    <name type="common">Human</name>
    <dbReference type="NCBI Taxonomy" id="9606"/>
    <lineage>
        <taxon>Eukaryota</taxon>
        <taxon>Metazoa</taxon>
        <taxon>Chordata</taxon>
        <taxon>Craniata</taxon>
        <taxon>Vertebrata</taxon>
        <taxon>Euteleostomi</taxon>
        <taxon>Mammalia</taxon>
        <taxon>Eutheria</taxon>
        <taxon>Euarchontoglires</taxon>
        <taxon>Primates</taxon>
        <taxon>Haplorrhini</taxon>
        <taxon>Catarrhini</taxon>
        <taxon>Hominidae</taxon>
        <taxon>Homo</taxon>
    </lineage>
</organism>
<evidence type="ECO:0000305" key="1"/>
<name>YK039_HUMAN</name>
<gene>
    <name type="ORF">PRO1716</name>
</gene>
<keyword id="KW-1185">Reference proteome</keyword>
<protein>
    <recommendedName>
        <fullName>Putative uncharacterized protein PRO1716</fullName>
    </recommendedName>
</protein>